<gene>
    <name evidence="1" type="primary">hisS</name>
    <name type="ordered locus">MSC_0334</name>
</gene>
<accession>P62372</accession>
<sequence length="414" mass="48327">MLQKPRGTQDFFLDEAKLWNKVETKLKEILDQFNYSEIRTPMFESKELFIRSIGSTTDIVSKEMYEFVDKKNRSLVLKPEGTASVVRAVIENKLYAEENLPLKVYYISPMFRYERPQNGRYRQFHQLGIEVFGSDSIQQDYEVLNIATKIINQFKLNKNIKIYTNFLITGKNREDYILELKKYLSDFKLCNDCNTRLEKNPLRVLDCKIDDKQFKNVPSMQDFLTKEQKTRYDQTLELFKKTNISVIHDDKLVRGLDYYTGFIFEIKYLNNNNEQTIIAGGRYNNLVNEIGNINLAACGFGMGLERFINIIKEQNSSLVNQKTNIDLYTICIDDLAIELNQQILDLTRSIGLKADSNYYHLSLKSALKKADKLNPKYVIILGSNEAKTNEFIIKDQINKTQIKTTLTKFIKDLK</sequence>
<reference key="1">
    <citation type="journal article" date="2004" name="Genome Res.">
        <title>The genome sequence of Mycoplasma mycoides subsp. mycoides SC type strain PG1T, the causative agent of contagious bovine pleuropneumonia (CBPP).</title>
        <authorList>
            <person name="Westberg J."/>
            <person name="Persson A."/>
            <person name="Holmberg A."/>
            <person name="Goesmann A."/>
            <person name="Lundeberg J."/>
            <person name="Johansson K.-E."/>
            <person name="Pettersson B."/>
            <person name="Uhlen M."/>
        </authorList>
    </citation>
    <scope>NUCLEOTIDE SEQUENCE [LARGE SCALE GENOMIC DNA]</scope>
    <source>
        <strain>CCUG 32753 / NCTC 10114 / PG1</strain>
    </source>
</reference>
<dbReference type="EC" id="6.1.1.21" evidence="1"/>
<dbReference type="EMBL" id="BX293980">
    <property type="protein sequence ID" value="CAE76974.1"/>
    <property type="molecule type" value="Genomic_DNA"/>
</dbReference>
<dbReference type="RefSeq" id="NP_975332.1">
    <property type="nucleotide sequence ID" value="NC_005364.2"/>
</dbReference>
<dbReference type="RefSeq" id="WP_011166530.1">
    <property type="nucleotide sequence ID" value="NC_005364.2"/>
</dbReference>
<dbReference type="SMR" id="P62372"/>
<dbReference type="STRING" id="272632.MSC_0334"/>
<dbReference type="KEGG" id="mmy:MSC_0334"/>
<dbReference type="PATRIC" id="fig|272632.4.peg.360"/>
<dbReference type="eggNOG" id="COG0124">
    <property type="taxonomic scope" value="Bacteria"/>
</dbReference>
<dbReference type="HOGENOM" id="CLU_025113_1_1_14"/>
<dbReference type="Proteomes" id="UP000001016">
    <property type="component" value="Chromosome"/>
</dbReference>
<dbReference type="GO" id="GO:0005737">
    <property type="term" value="C:cytoplasm"/>
    <property type="evidence" value="ECO:0007669"/>
    <property type="project" value="UniProtKB-SubCell"/>
</dbReference>
<dbReference type="GO" id="GO:0005524">
    <property type="term" value="F:ATP binding"/>
    <property type="evidence" value="ECO:0007669"/>
    <property type="project" value="UniProtKB-UniRule"/>
</dbReference>
<dbReference type="GO" id="GO:0004821">
    <property type="term" value="F:histidine-tRNA ligase activity"/>
    <property type="evidence" value="ECO:0007669"/>
    <property type="project" value="UniProtKB-UniRule"/>
</dbReference>
<dbReference type="GO" id="GO:0006427">
    <property type="term" value="P:histidyl-tRNA aminoacylation"/>
    <property type="evidence" value="ECO:0007669"/>
    <property type="project" value="UniProtKB-UniRule"/>
</dbReference>
<dbReference type="CDD" id="cd00773">
    <property type="entry name" value="HisRS-like_core"/>
    <property type="match status" value="1"/>
</dbReference>
<dbReference type="Gene3D" id="3.40.50.800">
    <property type="entry name" value="Anticodon-binding domain"/>
    <property type="match status" value="1"/>
</dbReference>
<dbReference type="Gene3D" id="3.30.930.10">
    <property type="entry name" value="Bira Bifunctional Protein, Domain 2"/>
    <property type="match status" value="1"/>
</dbReference>
<dbReference type="HAMAP" id="MF_00127">
    <property type="entry name" value="His_tRNA_synth"/>
    <property type="match status" value="1"/>
</dbReference>
<dbReference type="InterPro" id="IPR006195">
    <property type="entry name" value="aa-tRNA-synth_II"/>
</dbReference>
<dbReference type="InterPro" id="IPR045864">
    <property type="entry name" value="aa-tRNA-synth_II/BPL/LPL"/>
</dbReference>
<dbReference type="InterPro" id="IPR036621">
    <property type="entry name" value="Anticodon-bd_dom_sf"/>
</dbReference>
<dbReference type="InterPro" id="IPR015807">
    <property type="entry name" value="His-tRNA-ligase"/>
</dbReference>
<dbReference type="InterPro" id="IPR041715">
    <property type="entry name" value="HisRS-like_core"/>
</dbReference>
<dbReference type="InterPro" id="IPR004516">
    <property type="entry name" value="HisRS/HisZ"/>
</dbReference>
<dbReference type="NCBIfam" id="TIGR00442">
    <property type="entry name" value="hisS"/>
    <property type="match status" value="1"/>
</dbReference>
<dbReference type="PANTHER" id="PTHR43707:SF1">
    <property type="entry name" value="HISTIDINE--TRNA LIGASE, MITOCHONDRIAL-RELATED"/>
    <property type="match status" value="1"/>
</dbReference>
<dbReference type="PANTHER" id="PTHR43707">
    <property type="entry name" value="HISTIDYL-TRNA SYNTHETASE"/>
    <property type="match status" value="1"/>
</dbReference>
<dbReference type="Pfam" id="PF13393">
    <property type="entry name" value="tRNA-synt_His"/>
    <property type="match status" value="1"/>
</dbReference>
<dbReference type="PIRSF" id="PIRSF001549">
    <property type="entry name" value="His-tRNA_synth"/>
    <property type="match status" value="1"/>
</dbReference>
<dbReference type="SUPFAM" id="SSF52954">
    <property type="entry name" value="Class II aaRS ABD-related"/>
    <property type="match status" value="1"/>
</dbReference>
<dbReference type="SUPFAM" id="SSF55681">
    <property type="entry name" value="Class II aaRS and biotin synthetases"/>
    <property type="match status" value="1"/>
</dbReference>
<dbReference type="PROSITE" id="PS50862">
    <property type="entry name" value="AA_TRNA_LIGASE_II"/>
    <property type="match status" value="1"/>
</dbReference>
<name>SYH_MYCMS</name>
<organism>
    <name type="scientific">Mycoplasma mycoides subsp. mycoides SC (strain CCUG 32753 / NCTC 10114 / PG1)</name>
    <dbReference type="NCBI Taxonomy" id="272632"/>
    <lineage>
        <taxon>Bacteria</taxon>
        <taxon>Bacillati</taxon>
        <taxon>Mycoplasmatota</taxon>
        <taxon>Mollicutes</taxon>
        <taxon>Mycoplasmataceae</taxon>
        <taxon>Mycoplasma</taxon>
    </lineage>
</organism>
<keyword id="KW-0030">Aminoacyl-tRNA synthetase</keyword>
<keyword id="KW-0067">ATP-binding</keyword>
<keyword id="KW-0963">Cytoplasm</keyword>
<keyword id="KW-0436">Ligase</keyword>
<keyword id="KW-0547">Nucleotide-binding</keyword>
<keyword id="KW-0648">Protein biosynthesis</keyword>
<keyword id="KW-1185">Reference proteome</keyword>
<feature type="chain" id="PRO_0000136203" description="Histidine--tRNA ligase">
    <location>
        <begin position="1"/>
        <end position="414"/>
    </location>
</feature>
<evidence type="ECO:0000255" key="1">
    <source>
        <dbReference type="HAMAP-Rule" id="MF_00127"/>
    </source>
</evidence>
<comment type="catalytic activity">
    <reaction evidence="1">
        <text>tRNA(His) + L-histidine + ATP = L-histidyl-tRNA(His) + AMP + diphosphate + H(+)</text>
        <dbReference type="Rhea" id="RHEA:17313"/>
        <dbReference type="Rhea" id="RHEA-COMP:9665"/>
        <dbReference type="Rhea" id="RHEA-COMP:9689"/>
        <dbReference type="ChEBI" id="CHEBI:15378"/>
        <dbReference type="ChEBI" id="CHEBI:30616"/>
        <dbReference type="ChEBI" id="CHEBI:33019"/>
        <dbReference type="ChEBI" id="CHEBI:57595"/>
        <dbReference type="ChEBI" id="CHEBI:78442"/>
        <dbReference type="ChEBI" id="CHEBI:78527"/>
        <dbReference type="ChEBI" id="CHEBI:456215"/>
        <dbReference type="EC" id="6.1.1.21"/>
    </reaction>
</comment>
<comment type="subunit">
    <text evidence="1">Homodimer.</text>
</comment>
<comment type="subcellular location">
    <subcellularLocation>
        <location evidence="1">Cytoplasm</location>
    </subcellularLocation>
</comment>
<comment type="similarity">
    <text evidence="1">Belongs to the class-II aminoacyl-tRNA synthetase family.</text>
</comment>
<proteinExistence type="inferred from homology"/>
<protein>
    <recommendedName>
        <fullName evidence="1">Histidine--tRNA ligase</fullName>
        <ecNumber evidence="1">6.1.1.21</ecNumber>
    </recommendedName>
    <alternativeName>
        <fullName evidence="1">Histidyl-tRNA synthetase</fullName>
        <shortName evidence="1">HisRS</shortName>
    </alternativeName>
</protein>